<dbReference type="EC" id="4.1.1.23" evidence="1"/>
<dbReference type="EMBL" id="AL591981">
    <property type="protein sequence ID" value="CAC99910.1"/>
    <property type="molecule type" value="Genomic_DNA"/>
</dbReference>
<dbReference type="PIR" id="AH1303">
    <property type="entry name" value="AH1303"/>
</dbReference>
<dbReference type="RefSeq" id="NP_465357.1">
    <property type="nucleotide sequence ID" value="NC_003210.1"/>
</dbReference>
<dbReference type="RefSeq" id="WP_003723076.1">
    <property type="nucleotide sequence ID" value="NZ_CP149495.1"/>
</dbReference>
<dbReference type="SMR" id="P58641"/>
<dbReference type="STRING" id="169963.gene:17594517"/>
<dbReference type="PaxDb" id="169963-lmo1832"/>
<dbReference type="EnsemblBacteria" id="CAC99910">
    <property type="protein sequence ID" value="CAC99910"/>
    <property type="gene ID" value="CAC99910"/>
</dbReference>
<dbReference type="GeneID" id="985880"/>
<dbReference type="KEGG" id="lmo:lmo1832"/>
<dbReference type="PATRIC" id="fig|169963.11.peg.1877"/>
<dbReference type="eggNOG" id="COG0284">
    <property type="taxonomic scope" value="Bacteria"/>
</dbReference>
<dbReference type="HOGENOM" id="CLU_067069_1_1_9"/>
<dbReference type="OrthoDB" id="9806203at2"/>
<dbReference type="PhylomeDB" id="P58641"/>
<dbReference type="BioCyc" id="LMON169963:LMO1832-MONOMER"/>
<dbReference type="UniPathway" id="UPA00070">
    <property type="reaction ID" value="UER00120"/>
</dbReference>
<dbReference type="Proteomes" id="UP000000817">
    <property type="component" value="Chromosome"/>
</dbReference>
<dbReference type="GO" id="GO:0005829">
    <property type="term" value="C:cytosol"/>
    <property type="evidence" value="ECO:0000318"/>
    <property type="project" value="GO_Central"/>
</dbReference>
<dbReference type="GO" id="GO:0004590">
    <property type="term" value="F:orotidine-5'-phosphate decarboxylase activity"/>
    <property type="evidence" value="ECO:0000318"/>
    <property type="project" value="GO_Central"/>
</dbReference>
<dbReference type="GO" id="GO:0006207">
    <property type="term" value="P:'de novo' pyrimidine nucleobase biosynthetic process"/>
    <property type="evidence" value="ECO:0000318"/>
    <property type="project" value="GO_Central"/>
</dbReference>
<dbReference type="GO" id="GO:0044205">
    <property type="term" value="P:'de novo' UMP biosynthetic process"/>
    <property type="evidence" value="ECO:0007669"/>
    <property type="project" value="UniProtKB-UniRule"/>
</dbReference>
<dbReference type="CDD" id="cd04725">
    <property type="entry name" value="OMP_decarboxylase_like"/>
    <property type="match status" value="1"/>
</dbReference>
<dbReference type="FunFam" id="3.20.20.70:FF:000015">
    <property type="entry name" value="Orotidine 5'-phosphate decarboxylase"/>
    <property type="match status" value="1"/>
</dbReference>
<dbReference type="Gene3D" id="3.20.20.70">
    <property type="entry name" value="Aldolase class I"/>
    <property type="match status" value="1"/>
</dbReference>
<dbReference type="HAMAP" id="MF_01200_B">
    <property type="entry name" value="OMPdecase_type1_B"/>
    <property type="match status" value="1"/>
</dbReference>
<dbReference type="InterPro" id="IPR013785">
    <property type="entry name" value="Aldolase_TIM"/>
</dbReference>
<dbReference type="InterPro" id="IPR014732">
    <property type="entry name" value="OMPdecase"/>
</dbReference>
<dbReference type="InterPro" id="IPR018089">
    <property type="entry name" value="OMPdecase_AS"/>
</dbReference>
<dbReference type="InterPro" id="IPR047596">
    <property type="entry name" value="OMPdecase_bac"/>
</dbReference>
<dbReference type="InterPro" id="IPR001754">
    <property type="entry name" value="OMPdeCOase_dom"/>
</dbReference>
<dbReference type="InterPro" id="IPR011060">
    <property type="entry name" value="RibuloseP-bd_barrel"/>
</dbReference>
<dbReference type="NCBIfam" id="NF001273">
    <property type="entry name" value="PRK00230.1"/>
    <property type="match status" value="1"/>
</dbReference>
<dbReference type="NCBIfam" id="TIGR01740">
    <property type="entry name" value="pyrF"/>
    <property type="match status" value="1"/>
</dbReference>
<dbReference type="PANTHER" id="PTHR32119">
    <property type="entry name" value="OROTIDINE 5'-PHOSPHATE DECARBOXYLASE"/>
    <property type="match status" value="1"/>
</dbReference>
<dbReference type="PANTHER" id="PTHR32119:SF2">
    <property type="entry name" value="OROTIDINE 5'-PHOSPHATE DECARBOXYLASE"/>
    <property type="match status" value="1"/>
</dbReference>
<dbReference type="Pfam" id="PF00215">
    <property type="entry name" value="OMPdecase"/>
    <property type="match status" value="1"/>
</dbReference>
<dbReference type="SMART" id="SM00934">
    <property type="entry name" value="OMPdecase"/>
    <property type="match status" value="1"/>
</dbReference>
<dbReference type="SUPFAM" id="SSF51366">
    <property type="entry name" value="Ribulose-phoshate binding barrel"/>
    <property type="match status" value="1"/>
</dbReference>
<dbReference type="PROSITE" id="PS00156">
    <property type="entry name" value="OMPDECASE"/>
    <property type="match status" value="1"/>
</dbReference>
<name>PYRF_LISMO</name>
<comment type="function">
    <text evidence="1">Catalyzes the decarboxylation of orotidine 5'-monophosphate (OMP) to uridine 5'-monophosphate (UMP).</text>
</comment>
<comment type="catalytic activity">
    <reaction evidence="1">
        <text>orotidine 5'-phosphate + H(+) = UMP + CO2</text>
        <dbReference type="Rhea" id="RHEA:11596"/>
        <dbReference type="ChEBI" id="CHEBI:15378"/>
        <dbReference type="ChEBI" id="CHEBI:16526"/>
        <dbReference type="ChEBI" id="CHEBI:57538"/>
        <dbReference type="ChEBI" id="CHEBI:57865"/>
        <dbReference type="EC" id="4.1.1.23"/>
    </reaction>
</comment>
<comment type="pathway">
    <text evidence="1">Pyrimidine metabolism; UMP biosynthesis via de novo pathway; UMP from orotate: step 2/2.</text>
</comment>
<comment type="subunit">
    <text evidence="1">Homodimer.</text>
</comment>
<comment type="similarity">
    <text evidence="1">Belongs to the OMP decarboxylase family. Type 1 subfamily.</text>
</comment>
<feature type="chain" id="PRO_0000134554" description="Orotidine 5'-phosphate decarboxylase">
    <location>
        <begin position="1"/>
        <end position="233"/>
    </location>
</feature>
<feature type="active site" description="Proton donor" evidence="1">
    <location>
        <position position="60"/>
    </location>
</feature>
<feature type="binding site" evidence="1">
    <location>
        <position position="9"/>
    </location>
    <ligand>
        <name>substrate</name>
    </ligand>
</feature>
<feature type="binding site" evidence="1">
    <location>
        <position position="31"/>
    </location>
    <ligand>
        <name>substrate</name>
    </ligand>
</feature>
<feature type="binding site" evidence="1">
    <location>
        <begin position="58"/>
        <end position="67"/>
    </location>
    <ligand>
        <name>substrate</name>
    </ligand>
</feature>
<feature type="binding site" evidence="1">
    <location>
        <position position="120"/>
    </location>
    <ligand>
        <name>substrate</name>
    </ligand>
</feature>
<feature type="binding site" evidence="1">
    <location>
        <position position="182"/>
    </location>
    <ligand>
        <name>substrate</name>
    </ligand>
</feature>
<feature type="binding site" evidence="1">
    <location>
        <position position="191"/>
    </location>
    <ligand>
        <name>substrate</name>
    </ligand>
</feature>
<feature type="binding site" evidence="1">
    <location>
        <position position="211"/>
    </location>
    <ligand>
        <name>substrate</name>
    </ligand>
</feature>
<feature type="binding site" evidence="1">
    <location>
        <position position="212"/>
    </location>
    <ligand>
        <name>substrate</name>
    </ligand>
</feature>
<sequence length="233" mass="25372">MNKPIIALDFQTYEEVETFLAKFSGETLSVKVGMELFYSNGPVIVEKIKQQNHEIFLDLKLHDIPNTVKSAMIGLAKLGVDMVNVHAAGGKKMMEAAKEGLEIGSPSGKRPKIIAVTQLTSTSETDMQTEQLIKTSLLESVMHYSNLSKQAGLDGVVCSALEAEDIKQQNGADFLRVTPGIRLASDTADDQIRVVTPEKARLIGSSNIVVGRSITRANDPVAAYNQVLKEWNA</sequence>
<proteinExistence type="inferred from homology"/>
<reference key="1">
    <citation type="journal article" date="2001" name="Science">
        <title>Comparative genomics of Listeria species.</title>
        <authorList>
            <person name="Glaser P."/>
            <person name="Frangeul L."/>
            <person name="Buchrieser C."/>
            <person name="Rusniok C."/>
            <person name="Amend A."/>
            <person name="Baquero F."/>
            <person name="Berche P."/>
            <person name="Bloecker H."/>
            <person name="Brandt P."/>
            <person name="Chakraborty T."/>
            <person name="Charbit A."/>
            <person name="Chetouani F."/>
            <person name="Couve E."/>
            <person name="de Daruvar A."/>
            <person name="Dehoux P."/>
            <person name="Domann E."/>
            <person name="Dominguez-Bernal G."/>
            <person name="Duchaud E."/>
            <person name="Durant L."/>
            <person name="Dussurget O."/>
            <person name="Entian K.-D."/>
            <person name="Fsihi H."/>
            <person name="Garcia-del Portillo F."/>
            <person name="Garrido P."/>
            <person name="Gautier L."/>
            <person name="Goebel W."/>
            <person name="Gomez-Lopez N."/>
            <person name="Hain T."/>
            <person name="Hauf J."/>
            <person name="Jackson D."/>
            <person name="Jones L.-M."/>
            <person name="Kaerst U."/>
            <person name="Kreft J."/>
            <person name="Kuhn M."/>
            <person name="Kunst F."/>
            <person name="Kurapkat G."/>
            <person name="Madueno E."/>
            <person name="Maitournam A."/>
            <person name="Mata Vicente J."/>
            <person name="Ng E."/>
            <person name="Nedjari H."/>
            <person name="Nordsiek G."/>
            <person name="Novella S."/>
            <person name="de Pablos B."/>
            <person name="Perez-Diaz J.-C."/>
            <person name="Purcell R."/>
            <person name="Remmel B."/>
            <person name="Rose M."/>
            <person name="Schlueter T."/>
            <person name="Simoes N."/>
            <person name="Tierrez A."/>
            <person name="Vazquez-Boland J.-A."/>
            <person name="Voss H."/>
            <person name="Wehland J."/>
            <person name="Cossart P."/>
        </authorList>
    </citation>
    <scope>NUCLEOTIDE SEQUENCE [LARGE SCALE GENOMIC DNA]</scope>
    <source>
        <strain>ATCC BAA-679 / EGD-e</strain>
    </source>
</reference>
<organism>
    <name type="scientific">Listeria monocytogenes serovar 1/2a (strain ATCC BAA-679 / EGD-e)</name>
    <dbReference type="NCBI Taxonomy" id="169963"/>
    <lineage>
        <taxon>Bacteria</taxon>
        <taxon>Bacillati</taxon>
        <taxon>Bacillota</taxon>
        <taxon>Bacilli</taxon>
        <taxon>Bacillales</taxon>
        <taxon>Listeriaceae</taxon>
        <taxon>Listeria</taxon>
    </lineage>
</organism>
<gene>
    <name evidence="1" type="primary">pyrF</name>
    <name type="ordered locus">lmo1832</name>
</gene>
<protein>
    <recommendedName>
        <fullName evidence="1">Orotidine 5'-phosphate decarboxylase</fullName>
        <ecNumber evidence="1">4.1.1.23</ecNumber>
    </recommendedName>
    <alternativeName>
        <fullName evidence="1">OMP decarboxylase</fullName>
        <shortName evidence="1">OMPDCase</shortName>
        <shortName evidence="1">OMPdecase</shortName>
    </alternativeName>
</protein>
<evidence type="ECO:0000255" key="1">
    <source>
        <dbReference type="HAMAP-Rule" id="MF_01200"/>
    </source>
</evidence>
<keyword id="KW-0210">Decarboxylase</keyword>
<keyword id="KW-0456">Lyase</keyword>
<keyword id="KW-0665">Pyrimidine biosynthesis</keyword>
<keyword id="KW-1185">Reference proteome</keyword>
<accession>P58641</accession>